<evidence type="ECO:0000255" key="1">
    <source>
        <dbReference type="HAMAP-Rule" id="MF_01874"/>
    </source>
</evidence>
<protein>
    <recommendedName>
        <fullName evidence="1">UPF0756 membrane protein YeaL</fullName>
    </recommendedName>
</protein>
<reference key="1">
    <citation type="journal article" date="2011" name="J. Bacteriol.">
        <title>Comparative genomics of 28 Salmonella enterica isolates: evidence for CRISPR-mediated adaptive sublineage evolution.</title>
        <authorList>
            <person name="Fricke W.F."/>
            <person name="Mammel M.K."/>
            <person name="McDermott P.F."/>
            <person name="Tartera C."/>
            <person name="White D.G."/>
            <person name="Leclerc J.E."/>
            <person name="Ravel J."/>
            <person name="Cebula T.A."/>
        </authorList>
    </citation>
    <scope>NUCLEOTIDE SEQUENCE [LARGE SCALE GENOMIC DNA]</scope>
    <source>
        <strain>CVM19633</strain>
    </source>
</reference>
<dbReference type="EMBL" id="CP001127">
    <property type="protein sequence ID" value="ACF92355.1"/>
    <property type="molecule type" value="Genomic_DNA"/>
</dbReference>
<dbReference type="RefSeq" id="WP_000460698.1">
    <property type="nucleotide sequence ID" value="NC_011094.1"/>
</dbReference>
<dbReference type="KEGG" id="sew:SeSA_A1372"/>
<dbReference type="HOGENOM" id="CLU_125889_0_0_6"/>
<dbReference type="Proteomes" id="UP000001865">
    <property type="component" value="Chromosome"/>
</dbReference>
<dbReference type="GO" id="GO:0005886">
    <property type="term" value="C:plasma membrane"/>
    <property type="evidence" value="ECO:0007669"/>
    <property type="project" value="UniProtKB-SubCell"/>
</dbReference>
<dbReference type="HAMAP" id="MF_01874">
    <property type="entry name" value="UPF0756"/>
    <property type="match status" value="1"/>
</dbReference>
<dbReference type="InterPro" id="IPR007382">
    <property type="entry name" value="UPF0756_TM"/>
</dbReference>
<dbReference type="PANTHER" id="PTHR38452">
    <property type="entry name" value="UPF0756 MEMBRANE PROTEIN YEAL"/>
    <property type="match status" value="1"/>
</dbReference>
<dbReference type="PANTHER" id="PTHR38452:SF1">
    <property type="entry name" value="UPF0756 MEMBRANE PROTEIN YEAL"/>
    <property type="match status" value="1"/>
</dbReference>
<dbReference type="Pfam" id="PF04284">
    <property type="entry name" value="DUF441"/>
    <property type="match status" value="1"/>
</dbReference>
<keyword id="KW-1003">Cell membrane</keyword>
<keyword id="KW-0472">Membrane</keyword>
<keyword id="KW-0812">Transmembrane</keyword>
<keyword id="KW-1133">Transmembrane helix</keyword>
<sequence>MFDVTLLILLGLAALGFISHNTTVAVSILVLIIVRVTPLNTFFPWIEKQGLTVGIIILTIGVMAPIASGTLPPSTLIHSFVNWKSLVAIAVGVFVSWLGGRGITLMGNQPQLVAGLLVGTVLGVALFRGVPVGPLIAAGLVSLIVGKQ</sequence>
<organism>
    <name type="scientific">Salmonella schwarzengrund (strain CVM19633)</name>
    <dbReference type="NCBI Taxonomy" id="439843"/>
    <lineage>
        <taxon>Bacteria</taxon>
        <taxon>Pseudomonadati</taxon>
        <taxon>Pseudomonadota</taxon>
        <taxon>Gammaproteobacteria</taxon>
        <taxon>Enterobacterales</taxon>
        <taxon>Enterobacteriaceae</taxon>
        <taxon>Salmonella</taxon>
    </lineage>
</organism>
<feature type="chain" id="PRO_0000388932" description="UPF0756 membrane protein YeaL">
    <location>
        <begin position="1"/>
        <end position="148"/>
    </location>
</feature>
<feature type="transmembrane region" description="Helical" evidence="1">
    <location>
        <begin position="14"/>
        <end position="34"/>
    </location>
</feature>
<feature type="transmembrane region" description="Helical" evidence="1">
    <location>
        <begin position="51"/>
        <end position="71"/>
    </location>
</feature>
<feature type="transmembrane region" description="Helical" evidence="1">
    <location>
        <begin position="86"/>
        <end position="106"/>
    </location>
</feature>
<feature type="transmembrane region" description="Helical" evidence="1">
    <location>
        <begin position="121"/>
        <end position="141"/>
    </location>
</feature>
<proteinExistence type="inferred from homology"/>
<comment type="subcellular location">
    <subcellularLocation>
        <location evidence="1">Cell membrane</location>
        <topology evidence="1">Multi-pass membrane protein</topology>
    </subcellularLocation>
</comment>
<comment type="similarity">
    <text evidence="1">Belongs to the UPF0756 family.</text>
</comment>
<accession>B4TU95</accession>
<gene>
    <name evidence="1" type="primary">yeaL</name>
    <name type="ordered locus">SeSA_A1372</name>
</gene>
<name>YEAL_SALSV</name>